<reference key="1">
    <citation type="submission" date="2006-08" db="EMBL/GenBank/DDBJ databases">
        <title>Complete sequence of Maricaulis maris MCS10.</title>
        <authorList>
            <consortium name="US DOE Joint Genome Institute"/>
            <person name="Copeland A."/>
            <person name="Lucas S."/>
            <person name="Lapidus A."/>
            <person name="Barry K."/>
            <person name="Detter J.C."/>
            <person name="Glavina del Rio T."/>
            <person name="Hammon N."/>
            <person name="Israni S."/>
            <person name="Dalin E."/>
            <person name="Tice H."/>
            <person name="Pitluck S."/>
            <person name="Saunders E."/>
            <person name="Brettin T."/>
            <person name="Bruce D."/>
            <person name="Han C."/>
            <person name="Tapia R."/>
            <person name="Gilna P."/>
            <person name="Schmutz J."/>
            <person name="Larimer F."/>
            <person name="Land M."/>
            <person name="Hauser L."/>
            <person name="Kyrpides N."/>
            <person name="Mikhailova N."/>
            <person name="Viollier P."/>
            <person name="Stephens C."/>
            <person name="Richardson P."/>
        </authorList>
    </citation>
    <scope>NUCLEOTIDE SEQUENCE [LARGE SCALE GENOMIC DNA]</scope>
    <source>
        <strain>MCS10</strain>
    </source>
</reference>
<comment type="function">
    <text evidence="1">Catalyzes the attachment of serine to tRNA(Ser). Is also able to aminoacylate tRNA(Sec) with serine, to form the misacylated tRNA L-seryl-tRNA(Sec), which will be further converted into selenocysteinyl-tRNA(Sec).</text>
</comment>
<comment type="catalytic activity">
    <reaction evidence="1">
        <text>tRNA(Ser) + L-serine + ATP = L-seryl-tRNA(Ser) + AMP + diphosphate + H(+)</text>
        <dbReference type="Rhea" id="RHEA:12292"/>
        <dbReference type="Rhea" id="RHEA-COMP:9669"/>
        <dbReference type="Rhea" id="RHEA-COMP:9703"/>
        <dbReference type="ChEBI" id="CHEBI:15378"/>
        <dbReference type="ChEBI" id="CHEBI:30616"/>
        <dbReference type="ChEBI" id="CHEBI:33019"/>
        <dbReference type="ChEBI" id="CHEBI:33384"/>
        <dbReference type="ChEBI" id="CHEBI:78442"/>
        <dbReference type="ChEBI" id="CHEBI:78533"/>
        <dbReference type="ChEBI" id="CHEBI:456215"/>
        <dbReference type="EC" id="6.1.1.11"/>
    </reaction>
</comment>
<comment type="catalytic activity">
    <reaction evidence="1">
        <text>tRNA(Sec) + L-serine + ATP = L-seryl-tRNA(Sec) + AMP + diphosphate + H(+)</text>
        <dbReference type="Rhea" id="RHEA:42580"/>
        <dbReference type="Rhea" id="RHEA-COMP:9742"/>
        <dbReference type="Rhea" id="RHEA-COMP:10128"/>
        <dbReference type="ChEBI" id="CHEBI:15378"/>
        <dbReference type="ChEBI" id="CHEBI:30616"/>
        <dbReference type="ChEBI" id="CHEBI:33019"/>
        <dbReference type="ChEBI" id="CHEBI:33384"/>
        <dbReference type="ChEBI" id="CHEBI:78442"/>
        <dbReference type="ChEBI" id="CHEBI:78533"/>
        <dbReference type="ChEBI" id="CHEBI:456215"/>
        <dbReference type="EC" id="6.1.1.11"/>
    </reaction>
</comment>
<comment type="pathway">
    <text evidence="1">Aminoacyl-tRNA biosynthesis; selenocysteinyl-tRNA(Sec) biosynthesis; L-seryl-tRNA(Sec) from L-serine and tRNA(Sec): step 1/1.</text>
</comment>
<comment type="subunit">
    <text evidence="1">Homodimer. The tRNA molecule binds across the dimer.</text>
</comment>
<comment type="subcellular location">
    <subcellularLocation>
        <location evidence="1">Cytoplasm</location>
    </subcellularLocation>
</comment>
<comment type="domain">
    <text evidence="1">Consists of two distinct domains, a catalytic core and a N-terminal extension that is involved in tRNA binding.</text>
</comment>
<comment type="similarity">
    <text evidence="1">Belongs to the class-II aminoacyl-tRNA synthetase family. Type-1 seryl-tRNA synthetase subfamily.</text>
</comment>
<organism>
    <name type="scientific">Maricaulis maris (strain MCS10)</name>
    <name type="common">Caulobacter maris</name>
    <dbReference type="NCBI Taxonomy" id="394221"/>
    <lineage>
        <taxon>Bacteria</taxon>
        <taxon>Pseudomonadati</taxon>
        <taxon>Pseudomonadota</taxon>
        <taxon>Alphaproteobacteria</taxon>
        <taxon>Maricaulales</taxon>
        <taxon>Maricaulaceae</taxon>
        <taxon>Maricaulis</taxon>
    </lineage>
</organism>
<name>SYS_MARMM</name>
<proteinExistence type="inferred from homology"/>
<protein>
    <recommendedName>
        <fullName evidence="1">Serine--tRNA ligase</fullName>
        <ecNumber evidence="1">6.1.1.11</ecNumber>
    </recommendedName>
    <alternativeName>
        <fullName evidence="1">Seryl-tRNA synthetase</fullName>
        <shortName evidence="1">SerRS</shortName>
    </alternativeName>
    <alternativeName>
        <fullName evidence="1">Seryl-tRNA(Ser/Sec) synthetase</fullName>
    </alternativeName>
</protein>
<gene>
    <name evidence="1" type="primary">serS</name>
    <name type="ordered locus">Mmar10_1906</name>
</gene>
<sequence length="425" mass="47412">MHDIKLIRDNPDAFDAGLAMRGLPAQSATLIELDASRREALGKQQDAETERNALSKQIGKAKASGDEAEFNRLRSEVDRLKAVLEESGQQARHFDEVLNQHLAALPNLPHADVPQGADEADNVEERRWGEPRTMAFTPRDHVDLGESLGQMDFKKAAEISGSRFVALRGGLARLERALAQFMLDLHTTEHGYEEVSPPYMVRDEAVFGTGQLPKFAEDLFRTTDDHWLIPTAEVPLTNLARETIHAEADLPMRMTAYTPCFRSEAGSAGRDTRGMIRLHQFQKVEMVSIVTPDESDAELERMTGCAEKVLQLLELPYRVMKLCTGDMGFAARRTYDLEVWMPSQDCYREISSCSTCGDFQARRMDARFRKEGEKRPAFLHTLNGSGVAVGRALVAVLENHQNEDGSITIPAALRPYMGGVERIEG</sequence>
<accession>Q0AND9</accession>
<evidence type="ECO:0000255" key="1">
    <source>
        <dbReference type="HAMAP-Rule" id="MF_00176"/>
    </source>
</evidence>
<feature type="chain" id="PRO_1000019724" description="Serine--tRNA ligase">
    <location>
        <begin position="1"/>
        <end position="425"/>
    </location>
</feature>
<feature type="binding site" evidence="1">
    <location>
        <begin position="231"/>
        <end position="233"/>
    </location>
    <ligand>
        <name>L-serine</name>
        <dbReference type="ChEBI" id="CHEBI:33384"/>
    </ligand>
</feature>
<feature type="binding site" evidence="1">
    <location>
        <begin position="262"/>
        <end position="264"/>
    </location>
    <ligand>
        <name>ATP</name>
        <dbReference type="ChEBI" id="CHEBI:30616"/>
    </ligand>
</feature>
<feature type="binding site" evidence="1">
    <location>
        <position position="285"/>
    </location>
    <ligand>
        <name>L-serine</name>
        <dbReference type="ChEBI" id="CHEBI:33384"/>
    </ligand>
</feature>
<feature type="binding site" evidence="1">
    <location>
        <begin position="349"/>
        <end position="352"/>
    </location>
    <ligand>
        <name>ATP</name>
        <dbReference type="ChEBI" id="CHEBI:30616"/>
    </ligand>
</feature>
<feature type="binding site" evidence="1">
    <location>
        <position position="385"/>
    </location>
    <ligand>
        <name>L-serine</name>
        <dbReference type="ChEBI" id="CHEBI:33384"/>
    </ligand>
</feature>
<keyword id="KW-0030">Aminoacyl-tRNA synthetase</keyword>
<keyword id="KW-0067">ATP-binding</keyword>
<keyword id="KW-0963">Cytoplasm</keyword>
<keyword id="KW-0436">Ligase</keyword>
<keyword id="KW-0547">Nucleotide-binding</keyword>
<keyword id="KW-0648">Protein biosynthesis</keyword>
<keyword id="KW-1185">Reference proteome</keyword>
<dbReference type="EC" id="6.1.1.11" evidence="1"/>
<dbReference type="EMBL" id="CP000449">
    <property type="protein sequence ID" value="ABI66198.1"/>
    <property type="molecule type" value="Genomic_DNA"/>
</dbReference>
<dbReference type="RefSeq" id="WP_011643843.1">
    <property type="nucleotide sequence ID" value="NC_008347.1"/>
</dbReference>
<dbReference type="SMR" id="Q0AND9"/>
<dbReference type="STRING" id="394221.Mmar10_1906"/>
<dbReference type="KEGG" id="mmr:Mmar10_1906"/>
<dbReference type="eggNOG" id="COG0172">
    <property type="taxonomic scope" value="Bacteria"/>
</dbReference>
<dbReference type="HOGENOM" id="CLU_023797_1_1_5"/>
<dbReference type="OrthoDB" id="9804647at2"/>
<dbReference type="UniPathway" id="UPA00906">
    <property type="reaction ID" value="UER00895"/>
</dbReference>
<dbReference type="Proteomes" id="UP000001964">
    <property type="component" value="Chromosome"/>
</dbReference>
<dbReference type="GO" id="GO:0005737">
    <property type="term" value="C:cytoplasm"/>
    <property type="evidence" value="ECO:0007669"/>
    <property type="project" value="UniProtKB-SubCell"/>
</dbReference>
<dbReference type="GO" id="GO:0005524">
    <property type="term" value="F:ATP binding"/>
    <property type="evidence" value="ECO:0007669"/>
    <property type="project" value="UniProtKB-UniRule"/>
</dbReference>
<dbReference type="GO" id="GO:0004828">
    <property type="term" value="F:serine-tRNA ligase activity"/>
    <property type="evidence" value="ECO:0007669"/>
    <property type="project" value="UniProtKB-UniRule"/>
</dbReference>
<dbReference type="GO" id="GO:0016260">
    <property type="term" value="P:selenocysteine biosynthetic process"/>
    <property type="evidence" value="ECO:0007669"/>
    <property type="project" value="UniProtKB-UniRule"/>
</dbReference>
<dbReference type="GO" id="GO:0006434">
    <property type="term" value="P:seryl-tRNA aminoacylation"/>
    <property type="evidence" value="ECO:0007669"/>
    <property type="project" value="UniProtKB-UniRule"/>
</dbReference>
<dbReference type="CDD" id="cd00770">
    <property type="entry name" value="SerRS_core"/>
    <property type="match status" value="1"/>
</dbReference>
<dbReference type="Gene3D" id="3.30.930.10">
    <property type="entry name" value="Bira Bifunctional Protein, Domain 2"/>
    <property type="match status" value="1"/>
</dbReference>
<dbReference type="Gene3D" id="1.10.287.40">
    <property type="entry name" value="Serine-tRNA synthetase, tRNA binding domain"/>
    <property type="match status" value="1"/>
</dbReference>
<dbReference type="HAMAP" id="MF_00176">
    <property type="entry name" value="Ser_tRNA_synth_type1"/>
    <property type="match status" value="1"/>
</dbReference>
<dbReference type="InterPro" id="IPR002314">
    <property type="entry name" value="aa-tRNA-synt_IIb"/>
</dbReference>
<dbReference type="InterPro" id="IPR006195">
    <property type="entry name" value="aa-tRNA-synth_II"/>
</dbReference>
<dbReference type="InterPro" id="IPR045864">
    <property type="entry name" value="aa-tRNA-synth_II/BPL/LPL"/>
</dbReference>
<dbReference type="InterPro" id="IPR002317">
    <property type="entry name" value="Ser-tRNA-ligase_type_1"/>
</dbReference>
<dbReference type="InterPro" id="IPR015866">
    <property type="entry name" value="Ser-tRNA-synth_1_N"/>
</dbReference>
<dbReference type="InterPro" id="IPR042103">
    <property type="entry name" value="SerRS_1_N_sf"/>
</dbReference>
<dbReference type="InterPro" id="IPR033729">
    <property type="entry name" value="SerRS_core"/>
</dbReference>
<dbReference type="InterPro" id="IPR010978">
    <property type="entry name" value="tRNA-bd_arm"/>
</dbReference>
<dbReference type="NCBIfam" id="TIGR00414">
    <property type="entry name" value="serS"/>
    <property type="match status" value="1"/>
</dbReference>
<dbReference type="PANTHER" id="PTHR43697:SF1">
    <property type="entry name" value="SERINE--TRNA LIGASE"/>
    <property type="match status" value="1"/>
</dbReference>
<dbReference type="PANTHER" id="PTHR43697">
    <property type="entry name" value="SERYL-TRNA SYNTHETASE"/>
    <property type="match status" value="1"/>
</dbReference>
<dbReference type="Pfam" id="PF02403">
    <property type="entry name" value="Seryl_tRNA_N"/>
    <property type="match status" value="1"/>
</dbReference>
<dbReference type="Pfam" id="PF00587">
    <property type="entry name" value="tRNA-synt_2b"/>
    <property type="match status" value="1"/>
</dbReference>
<dbReference type="PIRSF" id="PIRSF001529">
    <property type="entry name" value="Ser-tRNA-synth_IIa"/>
    <property type="match status" value="1"/>
</dbReference>
<dbReference type="PRINTS" id="PR00981">
    <property type="entry name" value="TRNASYNTHSER"/>
</dbReference>
<dbReference type="SUPFAM" id="SSF55681">
    <property type="entry name" value="Class II aaRS and biotin synthetases"/>
    <property type="match status" value="1"/>
</dbReference>
<dbReference type="SUPFAM" id="SSF46589">
    <property type="entry name" value="tRNA-binding arm"/>
    <property type="match status" value="1"/>
</dbReference>
<dbReference type="PROSITE" id="PS50862">
    <property type="entry name" value="AA_TRNA_LIGASE_II"/>
    <property type="match status" value="1"/>
</dbReference>